<gene>
    <name evidence="1" type="primary">aroA</name>
    <name type="ordered locus">Hlac_0687</name>
</gene>
<reference key="1">
    <citation type="journal article" date="2016" name="Stand. Genomic Sci.">
        <title>Complete genome sequence of the Antarctic Halorubrum lacusprofundi type strain ACAM 34.</title>
        <authorList>
            <person name="Anderson I.J."/>
            <person name="DasSarma P."/>
            <person name="Lucas S."/>
            <person name="Copeland A."/>
            <person name="Lapidus A."/>
            <person name="Del Rio T.G."/>
            <person name="Tice H."/>
            <person name="Dalin E."/>
            <person name="Bruce D.C."/>
            <person name="Goodwin L."/>
            <person name="Pitluck S."/>
            <person name="Sims D."/>
            <person name="Brettin T.S."/>
            <person name="Detter J.C."/>
            <person name="Han C.S."/>
            <person name="Larimer F."/>
            <person name="Hauser L."/>
            <person name="Land M."/>
            <person name="Ivanova N."/>
            <person name="Richardson P."/>
            <person name="Cavicchioli R."/>
            <person name="DasSarma S."/>
            <person name="Woese C.R."/>
            <person name="Kyrpides N.C."/>
        </authorList>
    </citation>
    <scope>NUCLEOTIDE SEQUENCE [LARGE SCALE GENOMIC DNA]</scope>
    <source>
        <strain>ATCC 49239 / DSM 5036 / JCM 8891 / ACAM 34</strain>
    </source>
</reference>
<feature type="chain" id="PRO_1000124689" description="3-phosphoshikimate 1-carboxyvinyltransferase">
    <location>
        <begin position="1"/>
        <end position="453"/>
    </location>
</feature>
<feature type="region of interest" description="Disordered" evidence="2">
    <location>
        <begin position="1"/>
        <end position="21"/>
    </location>
</feature>
<feature type="compositionally biased region" description="Polar residues" evidence="2">
    <location>
        <begin position="1"/>
        <end position="12"/>
    </location>
</feature>
<feature type="active site" description="Proton acceptor" evidence="1">
    <location>
        <position position="330"/>
    </location>
</feature>
<feature type="binding site" evidence="1">
    <location>
        <position position="20"/>
    </location>
    <ligand>
        <name>3-phosphoshikimate</name>
        <dbReference type="ChEBI" id="CHEBI:145989"/>
    </ligand>
</feature>
<feature type="binding site" evidence="1">
    <location>
        <position position="20"/>
    </location>
    <ligand>
        <name>phosphoenolpyruvate</name>
        <dbReference type="ChEBI" id="CHEBI:58702"/>
    </ligand>
</feature>
<feature type="binding site" evidence="1">
    <location>
        <position position="21"/>
    </location>
    <ligand>
        <name>3-phosphoshikimate</name>
        <dbReference type="ChEBI" id="CHEBI:145989"/>
    </ligand>
</feature>
<feature type="binding site" evidence="1">
    <location>
        <position position="25"/>
    </location>
    <ligand>
        <name>3-phosphoshikimate</name>
        <dbReference type="ChEBI" id="CHEBI:145989"/>
    </ligand>
</feature>
<feature type="binding site" evidence="1">
    <location>
        <position position="97"/>
    </location>
    <ligand>
        <name>phosphoenolpyruvate</name>
        <dbReference type="ChEBI" id="CHEBI:58702"/>
    </ligand>
</feature>
<feature type="binding site" evidence="1">
    <location>
        <position position="125"/>
    </location>
    <ligand>
        <name>phosphoenolpyruvate</name>
        <dbReference type="ChEBI" id="CHEBI:58702"/>
    </ligand>
</feature>
<feature type="binding site" evidence="1">
    <location>
        <position position="170"/>
    </location>
    <ligand>
        <name>3-phosphoshikimate</name>
        <dbReference type="ChEBI" id="CHEBI:145989"/>
    </ligand>
</feature>
<feature type="binding site" evidence="1">
    <location>
        <position position="171"/>
    </location>
    <ligand>
        <name>3-phosphoshikimate</name>
        <dbReference type="ChEBI" id="CHEBI:145989"/>
    </ligand>
</feature>
<feature type="binding site" evidence="1">
    <location>
        <position position="172"/>
    </location>
    <ligand>
        <name>3-phosphoshikimate</name>
        <dbReference type="ChEBI" id="CHEBI:145989"/>
    </ligand>
</feature>
<feature type="binding site" evidence="1">
    <location>
        <position position="172"/>
    </location>
    <ligand>
        <name>phosphoenolpyruvate</name>
        <dbReference type="ChEBI" id="CHEBI:58702"/>
    </ligand>
</feature>
<feature type="binding site" evidence="1">
    <location>
        <position position="198"/>
    </location>
    <ligand>
        <name>3-phosphoshikimate</name>
        <dbReference type="ChEBI" id="CHEBI:145989"/>
    </ligand>
</feature>
<feature type="binding site" evidence="1">
    <location>
        <position position="330"/>
    </location>
    <ligand>
        <name>3-phosphoshikimate</name>
        <dbReference type="ChEBI" id="CHEBI:145989"/>
    </ligand>
</feature>
<feature type="binding site" evidence="1">
    <location>
        <position position="357"/>
    </location>
    <ligand>
        <name>3-phosphoshikimate</name>
        <dbReference type="ChEBI" id="CHEBI:145989"/>
    </ligand>
</feature>
<feature type="binding site" evidence="1">
    <location>
        <position position="361"/>
    </location>
    <ligand>
        <name>phosphoenolpyruvate</name>
        <dbReference type="ChEBI" id="CHEBI:58702"/>
    </ligand>
</feature>
<feature type="binding site" evidence="1">
    <location>
        <position position="404"/>
    </location>
    <ligand>
        <name>phosphoenolpyruvate</name>
        <dbReference type="ChEBI" id="CHEBI:58702"/>
    </ligand>
</feature>
<proteinExistence type="inferred from homology"/>
<organism>
    <name type="scientific">Halorubrum lacusprofundi (strain ATCC 49239 / DSM 5036 / JCM 8891 / ACAM 34)</name>
    <dbReference type="NCBI Taxonomy" id="416348"/>
    <lineage>
        <taxon>Archaea</taxon>
        <taxon>Methanobacteriati</taxon>
        <taxon>Methanobacteriota</taxon>
        <taxon>Stenosarchaea group</taxon>
        <taxon>Halobacteria</taxon>
        <taxon>Halobacteriales</taxon>
        <taxon>Haloferacaceae</taxon>
        <taxon>Halorubrum</taxon>
    </lineage>
</organism>
<sequence>MDVNVTSSTVRGTTRAPPSKSYTHRALLAAGYSDGATVRSPLVSADTKATARAVTAFGGAVEPESGERFDDADALVVDGFDGRPAVPDDVIDCANSGTTMRLVTAAAALADGTTVLTGDESLRSRPQGPLLEALGDLGVRAESTRGNGQAPLVVSGPLAGGEVAIPGNVSSQYVTALLMAGAVTEEGVEIDLTTPLKSAPYVDITLELLDDFGIEATPVGDGGDALDGAAGAAGFVVDGGQSYAPAGGSYTVPGDFSSISYLVAAGAVAAEPGEPVRIEGAVPSAQGDSAIVEIVERMGADIEWDREAGVITVRRSELSGVEVDVGDTPDLLPTIAALGAVADGDTRIMNCEHVRYKETDRVSAMAEELEKLGAKTTEEPDTLTVHGSESDLRGASVDGRADHRIVMALAVAALVAEGTTTIRGGEHVDVSFPNFFDAMADLGIAVERDGAGE</sequence>
<evidence type="ECO:0000255" key="1">
    <source>
        <dbReference type="HAMAP-Rule" id="MF_00210"/>
    </source>
</evidence>
<evidence type="ECO:0000256" key="2">
    <source>
        <dbReference type="SAM" id="MobiDB-lite"/>
    </source>
</evidence>
<comment type="function">
    <text evidence="1">Catalyzes the transfer of the enolpyruvyl moiety of phosphoenolpyruvate (PEP) to the 5-hydroxyl of shikimate-3-phosphate (S3P) to produce enolpyruvyl shikimate-3-phosphate and inorganic phosphate.</text>
</comment>
<comment type="catalytic activity">
    <reaction evidence="1">
        <text>3-phosphoshikimate + phosphoenolpyruvate = 5-O-(1-carboxyvinyl)-3-phosphoshikimate + phosphate</text>
        <dbReference type="Rhea" id="RHEA:21256"/>
        <dbReference type="ChEBI" id="CHEBI:43474"/>
        <dbReference type="ChEBI" id="CHEBI:57701"/>
        <dbReference type="ChEBI" id="CHEBI:58702"/>
        <dbReference type="ChEBI" id="CHEBI:145989"/>
        <dbReference type="EC" id="2.5.1.19"/>
    </reaction>
    <physiologicalReaction direction="left-to-right" evidence="1">
        <dbReference type="Rhea" id="RHEA:21257"/>
    </physiologicalReaction>
</comment>
<comment type="pathway">
    <text evidence="1">Metabolic intermediate biosynthesis; chorismate biosynthesis.</text>
</comment>
<comment type="subunit">
    <text evidence="1">Monomer.</text>
</comment>
<comment type="subcellular location">
    <subcellularLocation>
        <location evidence="1">Cytoplasm</location>
    </subcellularLocation>
</comment>
<comment type="similarity">
    <text evidence="1">Belongs to the EPSP synthase family.</text>
</comment>
<keyword id="KW-0028">Amino-acid biosynthesis</keyword>
<keyword id="KW-0057">Aromatic amino acid biosynthesis</keyword>
<keyword id="KW-0963">Cytoplasm</keyword>
<keyword id="KW-1185">Reference proteome</keyword>
<keyword id="KW-0808">Transferase</keyword>
<protein>
    <recommendedName>
        <fullName evidence="1">3-phosphoshikimate 1-carboxyvinyltransferase</fullName>
        <ecNumber evidence="1">2.5.1.19</ecNumber>
    </recommendedName>
    <alternativeName>
        <fullName evidence="1">5-enolpyruvylshikimate-3-phosphate synthase</fullName>
        <shortName evidence="1">EPSP synthase</shortName>
        <shortName evidence="1">EPSPS</shortName>
    </alternativeName>
</protein>
<name>AROA_HALLT</name>
<dbReference type="EC" id="2.5.1.19" evidence="1"/>
<dbReference type="EMBL" id="CP001365">
    <property type="protein sequence ID" value="ACM56289.1"/>
    <property type="molecule type" value="Genomic_DNA"/>
</dbReference>
<dbReference type="RefSeq" id="WP_012659921.1">
    <property type="nucleotide sequence ID" value="NC_012029.1"/>
</dbReference>
<dbReference type="SMR" id="B9LUD2"/>
<dbReference type="GeneID" id="7401822"/>
<dbReference type="KEGG" id="hla:Hlac_0687"/>
<dbReference type="eggNOG" id="arCOG04134">
    <property type="taxonomic scope" value="Archaea"/>
</dbReference>
<dbReference type="HOGENOM" id="CLU_024321_0_0_2"/>
<dbReference type="UniPathway" id="UPA00053"/>
<dbReference type="Proteomes" id="UP000000740">
    <property type="component" value="Chromosome 1"/>
</dbReference>
<dbReference type="GO" id="GO:0005737">
    <property type="term" value="C:cytoplasm"/>
    <property type="evidence" value="ECO:0007669"/>
    <property type="project" value="UniProtKB-SubCell"/>
</dbReference>
<dbReference type="GO" id="GO:0003866">
    <property type="term" value="F:3-phosphoshikimate 1-carboxyvinyltransferase activity"/>
    <property type="evidence" value="ECO:0007669"/>
    <property type="project" value="UniProtKB-UniRule"/>
</dbReference>
<dbReference type="GO" id="GO:0008652">
    <property type="term" value="P:amino acid biosynthetic process"/>
    <property type="evidence" value="ECO:0007669"/>
    <property type="project" value="UniProtKB-KW"/>
</dbReference>
<dbReference type="GO" id="GO:0009073">
    <property type="term" value="P:aromatic amino acid family biosynthetic process"/>
    <property type="evidence" value="ECO:0007669"/>
    <property type="project" value="UniProtKB-KW"/>
</dbReference>
<dbReference type="GO" id="GO:0009423">
    <property type="term" value="P:chorismate biosynthetic process"/>
    <property type="evidence" value="ECO:0007669"/>
    <property type="project" value="UniProtKB-UniRule"/>
</dbReference>
<dbReference type="CDD" id="cd01556">
    <property type="entry name" value="EPSP_synthase"/>
    <property type="match status" value="1"/>
</dbReference>
<dbReference type="Gene3D" id="3.65.10.10">
    <property type="entry name" value="Enolpyruvate transferase domain"/>
    <property type="match status" value="2"/>
</dbReference>
<dbReference type="HAMAP" id="MF_00210">
    <property type="entry name" value="EPSP_synth"/>
    <property type="match status" value="1"/>
</dbReference>
<dbReference type="InterPro" id="IPR001986">
    <property type="entry name" value="Enolpyruvate_Tfrase_dom"/>
</dbReference>
<dbReference type="InterPro" id="IPR036968">
    <property type="entry name" value="Enolpyruvate_Tfrase_sf"/>
</dbReference>
<dbReference type="InterPro" id="IPR006264">
    <property type="entry name" value="EPSP_synthase"/>
</dbReference>
<dbReference type="InterPro" id="IPR023193">
    <property type="entry name" value="EPSP_synthase_CS"/>
</dbReference>
<dbReference type="InterPro" id="IPR013792">
    <property type="entry name" value="RNA3'P_cycl/enolpyr_Trfase_a/b"/>
</dbReference>
<dbReference type="NCBIfam" id="TIGR01356">
    <property type="entry name" value="aroA"/>
    <property type="match status" value="1"/>
</dbReference>
<dbReference type="PANTHER" id="PTHR21090">
    <property type="entry name" value="AROM/DEHYDROQUINATE SYNTHASE"/>
    <property type="match status" value="1"/>
</dbReference>
<dbReference type="PANTHER" id="PTHR21090:SF5">
    <property type="entry name" value="PENTAFUNCTIONAL AROM POLYPEPTIDE"/>
    <property type="match status" value="1"/>
</dbReference>
<dbReference type="Pfam" id="PF00275">
    <property type="entry name" value="EPSP_synthase"/>
    <property type="match status" value="1"/>
</dbReference>
<dbReference type="PIRSF" id="PIRSF000505">
    <property type="entry name" value="EPSPS"/>
    <property type="match status" value="1"/>
</dbReference>
<dbReference type="SUPFAM" id="SSF55205">
    <property type="entry name" value="EPT/RTPC-like"/>
    <property type="match status" value="1"/>
</dbReference>
<dbReference type="PROSITE" id="PS00104">
    <property type="entry name" value="EPSP_SYNTHASE_1"/>
    <property type="match status" value="1"/>
</dbReference>
<dbReference type="PROSITE" id="PS00885">
    <property type="entry name" value="EPSP_SYNTHASE_2"/>
    <property type="match status" value="1"/>
</dbReference>
<accession>B9LUD2</accession>